<keyword id="KW-0007">Acetylation</keyword>
<keyword id="KW-0009">Actin-binding</keyword>
<keyword id="KW-0963">Cytoplasm</keyword>
<keyword id="KW-0206">Cytoskeleton</keyword>
<keyword id="KW-0903">Direct protein sequencing</keyword>
<evidence type="ECO:0000269" key="1">
    <source>
    </source>
</evidence>
<evidence type="ECO:0000305" key="2"/>
<dbReference type="PIR" id="S13198">
    <property type="entry name" value="S13198"/>
</dbReference>
<dbReference type="SMR" id="P18320"/>
<dbReference type="iPTMnet" id="P18320"/>
<dbReference type="GO" id="GO:0005938">
    <property type="term" value="C:cell cortex"/>
    <property type="evidence" value="ECO:0007669"/>
    <property type="project" value="TreeGrafter"/>
</dbReference>
<dbReference type="GO" id="GO:0005856">
    <property type="term" value="C:cytoskeleton"/>
    <property type="evidence" value="ECO:0007669"/>
    <property type="project" value="UniProtKB-SubCell"/>
</dbReference>
<dbReference type="GO" id="GO:0003785">
    <property type="term" value="F:actin monomer binding"/>
    <property type="evidence" value="ECO:0007669"/>
    <property type="project" value="TreeGrafter"/>
</dbReference>
<dbReference type="GO" id="GO:0051128">
    <property type="term" value="P:regulation of cellular component organization"/>
    <property type="evidence" value="ECO:0007669"/>
    <property type="project" value="UniProtKB-ARBA"/>
</dbReference>
<dbReference type="CDD" id="cd00148">
    <property type="entry name" value="PROF"/>
    <property type="match status" value="1"/>
</dbReference>
<dbReference type="Gene3D" id="3.30.450.30">
    <property type="entry name" value="Dynein light chain 2a, cytoplasmic"/>
    <property type="match status" value="1"/>
</dbReference>
<dbReference type="InterPro" id="IPR048278">
    <property type="entry name" value="PFN"/>
</dbReference>
<dbReference type="InterPro" id="IPR005455">
    <property type="entry name" value="PFN_euk"/>
</dbReference>
<dbReference type="InterPro" id="IPR036140">
    <property type="entry name" value="PFN_sf"/>
</dbReference>
<dbReference type="InterPro" id="IPR027310">
    <property type="entry name" value="Profilin_CS"/>
</dbReference>
<dbReference type="PANTHER" id="PTHR11604">
    <property type="entry name" value="PROFILIN"/>
    <property type="match status" value="1"/>
</dbReference>
<dbReference type="PANTHER" id="PTHR11604:SF10">
    <property type="entry name" value="PROFILIN"/>
    <property type="match status" value="1"/>
</dbReference>
<dbReference type="Pfam" id="PF00235">
    <property type="entry name" value="Profilin"/>
    <property type="match status" value="1"/>
</dbReference>
<dbReference type="PRINTS" id="PR00392">
    <property type="entry name" value="PROFILIN"/>
</dbReference>
<dbReference type="SMART" id="SM00392">
    <property type="entry name" value="PROF"/>
    <property type="match status" value="1"/>
</dbReference>
<dbReference type="SUPFAM" id="SSF55770">
    <property type="entry name" value="Profilin (actin-binding protein)"/>
    <property type="match status" value="1"/>
</dbReference>
<dbReference type="PROSITE" id="PS00414">
    <property type="entry name" value="PROFILIN"/>
    <property type="match status" value="1"/>
</dbReference>
<name>PROF_HELCR</name>
<feature type="initiator methionine" description="Removed" evidence="1">
    <location>
        <position position="1"/>
    </location>
</feature>
<feature type="chain" id="PRO_0000199586" description="Profilin">
    <location>
        <begin position="2"/>
        <end position="140"/>
    </location>
</feature>
<feature type="modified residue" description="N-acetylserine" evidence="1">
    <location>
        <position position="2"/>
    </location>
</feature>
<accession>P18320</accession>
<proteinExistence type="evidence at protein level"/>
<organism>
    <name type="scientific">Heliocidaris crassispina</name>
    <name type="common">Sea urchin</name>
    <name type="synonym">Anthocidaris crassispina</name>
    <dbReference type="NCBI Taxonomy" id="1043166"/>
    <lineage>
        <taxon>Eukaryota</taxon>
        <taxon>Metazoa</taxon>
        <taxon>Echinodermata</taxon>
        <taxon>Eleutherozoa</taxon>
        <taxon>Echinozoa</taxon>
        <taxon>Echinoidea</taxon>
        <taxon>Euechinoidea</taxon>
        <taxon>Echinacea</taxon>
        <taxon>Camarodonta</taxon>
        <taxon>Echinidea</taxon>
        <taxon>Echinometridae</taxon>
        <taxon>Heliocidaris</taxon>
    </lineage>
</organism>
<comment type="function">
    <text>Binds to actin and affects the structure of the cytoskeleton. At high concentrations, profilin prevents the polymerization of actin, whereas it enhances it at low concentrations. By binding to PIP2, it inhibits the formation of IP3 and DG.</text>
</comment>
<comment type="subunit">
    <text>Occurs in many kinds of cells as a complex with monomeric actin in a 1:1 ratio.</text>
</comment>
<comment type="subcellular location">
    <subcellularLocation>
        <location>Cytoplasm</location>
        <location>Cytoskeleton</location>
    </subcellularLocation>
</comment>
<comment type="similarity">
    <text evidence="2">Belongs to the profilin family.</text>
</comment>
<protein>
    <recommendedName>
        <fullName>Profilin</fullName>
    </recommendedName>
</protein>
<sequence>MSWDSYIDNLIAQTKDASGTGHSDKACIIGIDGGAPWTTAGHANALKLEGQEGPNIARCFKSKDFTPFMSSGIVADGTKYQFLREEDGKLVLAKKKGQGALTLQSSKTAIVIGHAPEGGQQGNTNKGVAVIAEYLESLGM</sequence>
<reference key="1">
    <citation type="journal article" date="1990" name="Eur. J. Biochem.">
        <title>Primary structure of profilins from two species of Echinoidea and Physarum polycephalum.</title>
        <authorList>
            <person name="Takagi T."/>
            <person name="Mabuchi I."/>
            <person name="Hosoya H."/>
            <person name="Furuhashi K."/>
            <person name="Hatano S."/>
        </authorList>
    </citation>
    <scope>PROTEIN SEQUENCE OF 2-140</scope>
    <scope>ACETYLATION AT SER-2</scope>
</reference>